<name>PVA_BPCA1</name>
<gene>
    <name evidence="4" type="ORF">crAss001_57</name>
</gene>
<accession>A0A385DTA3</accession>
<feature type="chain" id="PRO_0000458029" description="Portal vertex auxiliary protein">
    <location>
        <begin position="1"/>
        <end position="104"/>
    </location>
</feature>
<feature type="disulfide bond" description="Interchain" evidence="1">
    <location>
        <begin position="25"/>
        <end position="88"/>
    </location>
</feature>
<feature type="disulfide bond" description="Interchain" evidence="1">
    <location>
        <position position="47"/>
    </location>
</feature>
<feature type="turn" evidence="5">
    <location>
        <begin position="26"/>
        <end position="28"/>
    </location>
</feature>
<feature type="strand" evidence="5">
    <location>
        <begin position="33"/>
        <end position="40"/>
    </location>
</feature>
<feature type="turn" evidence="5">
    <location>
        <begin position="41"/>
        <end position="43"/>
    </location>
</feature>
<feature type="strand" evidence="5">
    <location>
        <begin position="44"/>
        <end position="51"/>
    </location>
</feature>
<feature type="helix" evidence="5">
    <location>
        <begin position="55"/>
        <end position="65"/>
    </location>
</feature>
<feature type="helix" evidence="5">
    <location>
        <begin position="72"/>
        <end position="74"/>
    </location>
</feature>
<feature type="strand" evidence="5">
    <location>
        <begin position="75"/>
        <end position="83"/>
    </location>
</feature>
<feature type="strand" evidence="5">
    <location>
        <begin position="87"/>
        <end position="98"/>
    </location>
</feature>
<feature type="turn" evidence="5">
    <location>
        <begin position="99"/>
        <end position="101"/>
    </location>
</feature>
<keyword id="KW-0002">3D-structure</keyword>
<keyword id="KW-1015">Disulfide bond</keyword>
<keyword id="KW-1185">Reference proteome</keyword>
<keyword id="KW-0946">Virion</keyword>
<proteinExistence type="evidence at protein level"/>
<comment type="subunit">
    <text evidence="1">Homodimer; disulfide-linked (PubMed:37138077). Interacts with the major capsid protein (PubMed:37138077).</text>
</comment>
<comment type="subcellular location">
    <subcellularLocation>
        <location>Virion</location>
    </subcellularLocation>
    <text evidence="1">Localizes at the portal vertex. Present in 2 copies in the virion.</text>
</comment>
<sequence length="104" mass="11319">MAGQQGIYCAPDNIVPNRDRVDVGCAPDGAMQLWVMEYEVTGIGKGCAMCKAINPQQAEMLLKSNGIYNGSSYLYKVTRIEQVIVPPCNGLMAEQVVTYKDVVS</sequence>
<protein>
    <recommendedName>
        <fullName evidence="3">Portal vertex auxiliary protein</fullName>
    </recommendedName>
    <alternativeName>
        <fullName evidence="2">Gene product 57</fullName>
        <shortName evidence="2">gp57</shortName>
    </alternativeName>
</protein>
<evidence type="ECO:0000269" key="1">
    <source>
    </source>
</evidence>
<evidence type="ECO:0000303" key="2">
    <source>
    </source>
</evidence>
<evidence type="ECO:0000303" key="3">
    <source>
    </source>
</evidence>
<evidence type="ECO:0000312" key="4">
    <source>
        <dbReference type="EMBL" id="AXQ62700.1"/>
    </source>
</evidence>
<evidence type="ECO:0007829" key="5">
    <source>
        <dbReference type="PDB" id="7QOH"/>
    </source>
</evidence>
<dbReference type="EMBL" id="MH675552">
    <property type="protein sequence ID" value="AXQ62700.1"/>
    <property type="molecule type" value="Genomic_DNA"/>
</dbReference>
<dbReference type="PDB" id="7QOH">
    <property type="method" value="EM"/>
    <property type="resolution" value="3.32 A"/>
    <property type="chains" value="g/h=1-104"/>
</dbReference>
<dbReference type="PDB" id="7QOI">
    <property type="method" value="EM"/>
    <property type="resolution" value="3.62 A"/>
    <property type="chains" value="Ag/Ah/Bg/Bh/Cg/Ch/Dg/Dh/Eg/Eh=1-104"/>
</dbReference>
<dbReference type="PDB" id="8CKB">
    <property type="method" value="EM"/>
    <property type="resolution" value="4.39 A"/>
    <property type="chains" value="I001/I002/I003/I004/I005/I006/I007/I008/I009/PVP010=1-104"/>
</dbReference>
<dbReference type="PDBsum" id="7QOH"/>
<dbReference type="PDBsum" id="7QOI"/>
<dbReference type="PDBsum" id="8CKB"/>
<dbReference type="EMDB" id="EMD-14090"/>
<dbReference type="EMDB" id="EMD-14091"/>
<dbReference type="SMR" id="A0A385DTA3"/>
<dbReference type="Proteomes" id="UP000262320">
    <property type="component" value="Genome"/>
</dbReference>
<dbReference type="GO" id="GO:0044423">
    <property type="term" value="C:virion component"/>
    <property type="evidence" value="ECO:0007669"/>
    <property type="project" value="UniProtKB-KW"/>
</dbReference>
<organismHost>
    <name type="scientific">Bacteroides intestinalis</name>
    <dbReference type="NCBI Taxonomy" id="329854"/>
</organismHost>
<organism>
    <name type="scientific">Bacteroides phage crAss001</name>
    <name type="common">Bacteroides phage PhiCrAss001</name>
    <dbReference type="NCBI Taxonomy" id="2301731"/>
    <lineage>
        <taxon>Viruses</taxon>
        <taxon>Duplodnaviria</taxon>
        <taxon>Heunggongvirae</taxon>
        <taxon>Uroviricota</taxon>
        <taxon>Caudoviricetes</taxon>
        <taxon>Crassvirales</taxon>
        <taxon>Steigviridae</taxon>
        <taxon>Asinivirinae</taxon>
        <taxon>Kehishuvirus</taxon>
        <taxon>Kehishuvirus primarius</taxon>
    </lineage>
</organism>
<reference key="1">
    <citation type="journal article" date="2018" name="Nat. Commun.">
        <title>PhiCrAss001 represents the most abundant bacteriophage family in the human gut and infects Bacteroides intestinalis.</title>
        <authorList>
            <person name="Shkoporov A.N."/>
            <person name="Khokhlova E.V."/>
            <person name="Fitzgerald C.B."/>
            <person name="Stockdale S.R."/>
            <person name="Draper L.A."/>
            <person name="Ross R.P."/>
            <person name="Hill C."/>
        </authorList>
    </citation>
    <scope>NUCLEOTIDE SEQUENCE [LARGE SCALE GENOMIC DNA]</scope>
</reference>
<reference key="2">
    <citation type="journal article" date="2023" name="Nature">
        <title>Structural atlas of a human gut crassvirus.</title>
        <authorList>
            <person name="Bayfield O.W."/>
            <person name="Shkoporov A.N."/>
            <person name="Yutin N."/>
            <person name="Khokhlova E.V."/>
            <person name="Smith J.L.R."/>
            <person name="Hawkins D.E.D.P."/>
            <person name="Koonin E.V."/>
            <person name="Hill C."/>
            <person name="Antson A.A."/>
        </authorList>
    </citation>
    <scope>SUBCELLULAR LOCATION</scope>
    <scope>SUBUNIT</scope>
    <scope>DISULFIDE BONDS</scope>
    <scope>INTERACTION WITH THE MAJOR CAPSID PROTEIN</scope>
</reference>